<accession>D2Y2C3</accession>
<sequence length="85" mass="9849">MKSQIFFAVAALFLLTVRTYASKSKEQDLRDALFSAMFSADNQLNPQERECRYWLGTCSKTGDCCSHLSCSPKHGWCVWDWTFRK</sequence>
<name>H7A01_CYRHA</name>
<organism>
    <name type="scientific">Cyriopagopus hainanus</name>
    <name type="common">Chinese bird spider</name>
    <name type="synonym">Haplopelma hainanum</name>
    <dbReference type="NCBI Taxonomy" id="209901"/>
    <lineage>
        <taxon>Eukaryota</taxon>
        <taxon>Metazoa</taxon>
        <taxon>Ecdysozoa</taxon>
        <taxon>Arthropoda</taxon>
        <taxon>Chelicerata</taxon>
        <taxon>Arachnida</taxon>
        <taxon>Araneae</taxon>
        <taxon>Mygalomorphae</taxon>
        <taxon>Theraphosidae</taxon>
        <taxon>Haplopelma</taxon>
    </lineage>
</organism>
<feature type="signal peptide" evidence="3">
    <location>
        <begin position="1"/>
        <end position="21"/>
    </location>
</feature>
<feature type="propeptide" id="PRO_0000400577" evidence="7">
    <location>
        <begin position="22"/>
        <end position="49"/>
    </location>
</feature>
<feature type="peptide" id="PRO_0000400578" description="U5-theraphotoxin-Hhn1a" evidence="7">
    <location>
        <begin position="50"/>
        <end position="85"/>
    </location>
</feature>
<feature type="disulfide bond" evidence="2">
    <location>
        <begin position="51"/>
        <end position="65"/>
    </location>
</feature>
<feature type="disulfide bond" evidence="2">
    <location>
        <begin position="58"/>
        <end position="70"/>
    </location>
</feature>
<feature type="disulfide bond" evidence="2">
    <location>
        <begin position="64"/>
        <end position="77"/>
    </location>
</feature>
<comment type="function">
    <text evidence="1">Ion channel impairing toxin that inhibits voltage-gated sodium channels. The recombinantly expressed toxin shows a weak activity against Nav1.7/SCN9A, and shifts the voltage dependence of channel activation to more depolarized potentials.</text>
</comment>
<comment type="subcellular location">
    <subcellularLocation>
        <location evidence="4">Secreted</location>
    </subcellularLocation>
</comment>
<comment type="tissue specificity">
    <text evidence="7">Expressed by the venom gland.</text>
</comment>
<comment type="domain">
    <text evidence="2">The presence of a 'disulfide through disulfide knot' structurally defines this protein as a knottin.</text>
</comment>
<comment type="similarity">
    <text evidence="6">Belongs to the neurotoxin 10 (Hwtx-1) family. 18 (Hntx-VII) subfamily.</text>
</comment>
<proteinExistence type="evidence at protein level"/>
<keyword id="KW-0903">Direct protein sequencing</keyword>
<keyword id="KW-1015">Disulfide bond</keyword>
<keyword id="KW-0872">Ion channel impairing toxin</keyword>
<keyword id="KW-0960">Knottin</keyword>
<keyword id="KW-0528">Neurotoxin</keyword>
<keyword id="KW-0964">Secreted</keyword>
<keyword id="KW-0732">Signal</keyword>
<keyword id="KW-0800">Toxin</keyword>
<keyword id="KW-0738">Voltage-gated sodium channel impairing toxin</keyword>
<evidence type="ECO:0000250" key="1">
    <source>
        <dbReference type="UniProtKB" id="P0DQN1"/>
    </source>
</evidence>
<evidence type="ECO:0000250" key="2">
    <source>
        <dbReference type="UniProtKB" id="P83480"/>
    </source>
</evidence>
<evidence type="ECO:0000255" key="3"/>
<evidence type="ECO:0000269" key="4">
    <source>
    </source>
</evidence>
<evidence type="ECO:0000303" key="5">
    <source>
    </source>
</evidence>
<evidence type="ECO:0000305" key="6"/>
<evidence type="ECO:0000305" key="7">
    <source>
    </source>
</evidence>
<evidence type="ECO:0000312" key="8">
    <source>
        <dbReference type="EMBL" id="ADB56816.1"/>
    </source>
</evidence>
<dbReference type="EMBL" id="GU293000">
    <property type="protein sequence ID" value="ADB56816.1"/>
    <property type="molecule type" value="mRNA"/>
</dbReference>
<dbReference type="SMR" id="D2Y2C3"/>
<dbReference type="ArachnoServer" id="AS001873">
    <property type="toxin name" value="U5-theraphotoxin-Hhn1a"/>
</dbReference>
<dbReference type="GO" id="GO:0005576">
    <property type="term" value="C:extracellular region"/>
    <property type="evidence" value="ECO:0007669"/>
    <property type="project" value="UniProtKB-SubCell"/>
</dbReference>
<dbReference type="GO" id="GO:0008200">
    <property type="term" value="F:ion channel inhibitor activity"/>
    <property type="evidence" value="ECO:0007669"/>
    <property type="project" value="InterPro"/>
</dbReference>
<dbReference type="GO" id="GO:0017080">
    <property type="term" value="F:sodium channel regulator activity"/>
    <property type="evidence" value="ECO:0007669"/>
    <property type="project" value="UniProtKB-KW"/>
</dbReference>
<dbReference type="GO" id="GO:0090729">
    <property type="term" value="F:toxin activity"/>
    <property type="evidence" value="ECO:0007669"/>
    <property type="project" value="UniProtKB-KW"/>
</dbReference>
<dbReference type="InterPro" id="IPR011696">
    <property type="entry name" value="Huwentoxin-1"/>
</dbReference>
<dbReference type="Pfam" id="PF07740">
    <property type="entry name" value="Toxin_12"/>
    <property type="match status" value="1"/>
</dbReference>
<dbReference type="SUPFAM" id="SSF57059">
    <property type="entry name" value="omega toxin-like"/>
    <property type="match status" value="1"/>
</dbReference>
<reference key="1">
    <citation type="journal article" date="2010" name="J. Proteome Res.">
        <title>Molecular diversification of peptide toxins from the tarantula Haplopelma hainanum (Ornithoctonus hainana) venom based on transcriptomic, peptidomic, and genomic analyses.</title>
        <authorList>
            <person name="Tang X."/>
            <person name="Zhang Y."/>
            <person name="Hu W."/>
            <person name="Xu D."/>
            <person name="Tao H."/>
            <person name="Yang X."/>
            <person name="Li Y."/>
            <person name="Jiang L."/>
            <person name="Liang S."/>
        </authorList>
    </citation>
    <scope>NUCLEOTIDE SEQUENCE [LARGE SCALE MRNA]</scope>
    <scope>PROTEIN SEQUENCE OF 50-82</scope>
    <scope>SUBCELLULAR LOCATION</scope>
    <scope>IDENTIFICATION BY MASS SPECTROMETRY</scope>
    <source>
        <tissue>Venom</tissue>
        <tissue>Venom gland</tissue>
    </source>
</reference>
<protein>
    <recommendedName>
        <fullName evidence="6">U5-theraphotoxin-Hhn1a</fullName>
        <shortName evidence="6">U5-TRTX-Hhn1a</shortName>
    </recommendedName>
    <alternativeName>
        <fullName evidence="5 8">Hainantoxin-VII</fullName>
        <shortName evidence="5 8">HNTX-VII</shortName>
    </alternativeName>
    <alternativeName>
        <fullName evidence="5">Peptide F4-32.71</fullName>
    </alternativeName>
</protein>